<organism>
    <name type="scientific">Homo sapiens</name>
    <name type="common">Human</name>
    <dbReference type="NCBI Taxonomy" id="9606"/>
    <lineage>
        <taxon>Eukaryota</taxon>
        <taxon>Metazoa</taxon>
        <taxon>Chordata</taxon>
        <taxon>Craniata</taxon>
        <taxon>Vertebrata</taxon>
        <taxon>Euteleostomi</taxon>
        <taxon>Mammalia</taxon>
        <taxon>Eutheria</taxon>
        <taxon>Euarchontoglires</taxon>
        <taxon>Primates</taxon>
        <taxon>Haplorrhini</taxon>
        <taxon>Catarrhini</taxon>
        <taxon>Hominidae</taxon>
        <taxon>Homo</taxon>
    </lineage>
</organism>
<accession>O43422</accession>
<accession>A8K728</accession>
<accession>Q17RY9</accession>
<accession>Q8WTW1</accession>
<accession>Q9Y3Z4</accession>
<feature type="chain" id="PRO_0000068634" description="52 kDa repressor of the inhibitor of the protein kinase">
    <location>
        <begin position="1"/>
        <end position="761"/>
    </location>
</feature>
<feature type="zinc finger region" description="THAP-type" evidence="1">
    <location>
        <begin position="1"/>
        <end position="86"/>
    </location>
</feature>
<feature type="region of interest" description="Disordered" evidence="2">
    <location>
        <begin position="116"/>
        <end position="149"/>
    </location>
</feature>
<feature type="compositionally biased region" description="Basic and acidic residues" evidence="2">
    <location>
        <begin position="116"/>
        <end position="132"/>
    </location>
</feature>
<feature type="modified residue" description="Phosphoserine" evidence="6">
    <location>
        <position position="566"/>
    </location>
</feature>
<feature type="splice variant" id="VSP_004355" description="In isoform Short." evidence="3">
    <original>VLSF</original>
    <variation>EIKI</variation>
    <location>
        <begin position="489"/>
        <end position="492"/>
    </location>
</feature>
<feature type="splice variant" id="VSP_004356" description="In isoform Short." evidence="3">
    <location>
        <begin position="493"/>
        <end position="761"/>
    </location>
</feature>
<feature type="sequence conflict" description="In Ref. 6." evidence="4" ref="6">
    <original>L</original>
    <variation>W</variation>
    <location>
        <position position="157"/>
    </location>
</feature>
<feature type="sequence conflict" description="In Ref. 6." evidence="4" ref="6">
    <original>D</original>
    <variation>V</variation>
    <location>
        <position position="738"/>
    </location>
</feature>
<feature type="sequence conflict" description="In Ref. 6." evidence="4" ref="6">
    <original>N</original>
    <variation>K</variation>
    <location>
        <position position="754"/>
    </location>
</feature>
<protein>
    <recommendedName>
        <fullName>52 kDa repressor of the inhibitor of the protein kinase</fullName>
        <shortName>p52rIPK</shortName>
    </recommendedName>
    <alternativeName>
        <fullName>58 kDa interferon-induced protein kinase-interacting protein</fullName>
        <shortName>p58IPK-interacting protein</shortName>
    </alternativeName>
    <alternativeName>
        <fullName>Death-associated protein 4</fullName>
    </alternativeName>
    <alternativeName>
        <fullName>THAP domain-containing protein 0</fullName>
    </alternativeName>
    <alternativeName>
        <fullName evidence="5">THAP domain-containing protein 12</fullName>
    </alternativeName>
</protein>
<evidence type="ECO:0000255" key="1">
    <source>
        <dbReference type="PROSITE-ProRule" id="PRU00309"/>
    </source>
</evidence>
<evidence type="ECO:0000256" key="2">
    <source>
        <dbReference type="SAM" id="MobiDB-lite"/>
    </source>
</evidence>
<evidence type="ECO:0000303" key="3">
    <source>
    </source>
</evidence>
<evidence type="ECO:0000305" key="4"/>
<evidence type="ECO:0000312" key="5">
    <source>
        <dbReference type="HGNC" id="HGNC:9440"/>
    </source>
</evidence>
<evidence type="ECO:0007744" key="6">
    <source>
    </source>
</evidence>
<name>P52K_HUMAN</name>
<keyword id="KW-0025">Alternative splicing</keyword>
<keyword id="KW-0238">DNA-binding</keyword>
<keyword id="KW-0479">Metal-binding</keyword>
<keyword id="KW-0597">Phosphoprotein</keyword>
<keyword id="KW-1267">Proteomics identification</keyword>
<keyword id="KW-1185">Reference proteome</keyword>
<keyword id="KW-0862">Zinc</keyword>
<keyword id="KW-0863">Zinc-finger</keyword>
<comment type="function">
    <text>Upstream regulator of interferon-induced serine/threonine protein kinase R (PKR). May block the PKR-inhibitory function of DNAJC3, resulting in restoration of kinase activity and suppression of cell growth.</text>
</comment>
<comment type="subunit">
    <text>Interacts with DNAJC3, probably sequestring it.</text>
</comment>
<comment type="interaction">
    <interactant intactId="EBI-2828217">
        <id>O43422</id>
    </interactant>
    <interactant intactId="EBI-10181113">
        <id>Q8N8K9</id>
        <label>KIAA1958</label>
    </interactant>
    <organismsDiffer>false</organismsDiffer>
    <experiments>3</experiments>
</comment>
<comment type="interaction">
    <interactant intactId="EBI-2828217">
        <id>O43422</id>
    </interactant>
    <interactant intactId="EBI-711619">
        <id>Q13228</id>
        <label>SELENBP1</label>
    </interactant>
    <organismsDiffer>false</organismsDiffer>
    <experiments>3</experiments>
</comment>
<comment type="interaction">
    <interactant intactId="EBI-2828217">
        <id>O43422</id>
    </interactant>
    <interactant intactId="EBI-624237">
        <id>O75410</id>
        <label>TACC1</label>
    </interactant>
    <organismsDiffer>false</organismsDiffer>
    <experiments>3</experiments>
</comment>
<comment type="interaction">
    <interactant intactId="EBI-2828217">
        <id>O43422</id>
    </interactant>
    <interactant intactId="EBI-12007872">
        <id>O75410-7</id>
        <label>TACC1</label>
    </interactant>
    <organismsDiffer>false</organismsDiffer>
    <experiments>3</experiments>
</comment>
<comment type="interaction">
    <interactant intactId="EBI-2828217">
        <id>O43422</id>
    </interactant>
    <interactant intactId="EBI-11035148">
        <id>Q8TF50</id>
        <label>ZNF526</label>
    </interactant>
    <organismsDiffer>false</organismsDiffer>
    <experiments>4</experiments>
</comment>
<comment type="interaction">
    <interactant intactId="EBI-2828217">
        <id>O43422</id>
    </interactant>
    <interactant intactId="EBI-2818349">
        <id>Q6ZN55</id>
        <label>ZNF574</label>
    </interactant>
    <organismsDiffer>false</organismsDiffer>
    <experiments>4</experiments>
</comment>
<comment type="alternative products">
    <event type="alternative splicing"/>
    <isoform>
        <id>O43422-1</id>
        <name>Long</name>
        <sequence type="displayed"/>
    </isoform>
    <isoform>
        <id>O43422-2</id>
        <name>Short</name>
        <sequence type="described" ref="VSP_004355 VSP_004356"/>
    </isoform>
</comment>
<comment type="sequence caution" evidence="4">
    <conflict type="erroneous initiation">
        <sequence resource="EMBL-CDS" id="AAH21992"/>
    </conflict>
</comment>
<comment type="sequence caution" evidence="4">
    <conflict type="frameshift">
        <sequence resource="EMBL-CDS" id="CAB43226"/>
    </conflict>
</comment>
<gene>
    <name evidence="5" type="primary">THAP12</name>
    <name type="synonym">DAP4</name>
    <name type="synonym">P52RIPK</name>
    <name type="synonym">PRKRIR</name>
    <name type="synonym">THAP0</name>
</gene>
<reference key="1">
    <citation type="journal article" date="1998" name="Mol. Cell. Biol.">
        <title>Regulation of interferon-induced protein kinase PKR: modulation of P58IPK inhibitory function by a novel protein, P52rIPK.</title>
        <authorList>
            <person name="Gale M.J. Jr."/>
            <person name="Blakely C.M."/>
            <person name="Hopkins D.A."/>
            <person name="Melville M.W."/>
            <person name="Wambach M."/>
            <person name="Romano P.R."/>
            <person name="Katze M.G."/>
        </authorList>
    </citation>
    <scope>NUCLEOTIDE SEQUENCE [MRNA] (ISOFORM SHORT)</scope>
</reference>
<reference key="2">
    <citation type="submission" date="1998-08" db="EMBL/GenBank/DDBJ databases">
        <authorList>
            <person name="Barzilay G."/>
            <person name="Kimchi A."/>
        </authorList>
    </citation>
    <scope>NUCLEOTIDE SEQUENCE [MRNA] (ISOFORM LONG)</scope>
</reference>
<reference key="3">
    <citation type="journal article" date="2004" name="Nat. Genet.">
        <title>Complete sequencing and characterization of 21,243 full-length human cDNAs.</title>
        <authorList>
            <person name="Ota T."/>
            <person name="Suzuki Y."/>
            <person name="Nishikawa T."/>
            <person name="Otsuki T."/>
            <person name="Sugiyama T."/>
            <person name="Irie R."/>
            <person name="Wakamatsu A."/>
            <person name="Hayashi K."/>
            <person name="Sato H."/>
            <person name="Nagai K."/>
            <person name="Kimura K."/>
            <person name="Makita H."/>
            <person name="Sekine M."/>
            <person name="Obayashi M."/>
            <person name="Nishi T."/>
            <person name="Shibahara T."/>
            <person name="Tanaka T."/>
            <person name="Ishii S."/>
            <person name="Yamamoto J."/>
            <person name="Saito K."/>
            <person name="Kawai Y."/>
            <person name="Isono Y."/>
            <person name="Nakamura Y."/>
            <person name="Nagahari K."/>
            <person name="Murakami K."/>
            <person name="Yasuda T."/>
            <person name="Iwayanagi T."/>
            <person name="Wagatsuma M."/>
            <person name="Shiratori A."/>
            <person name="Sudo H."/>
            <person name="Hosoiri T."/>
            <person name="Kaku Y."/>
            <person name="Kodaira H."/>
            <person name="Kondo H."/>
            <person name="Sugawara M."/>
            <person name="Takahashi M."/>
            <person name="Kanda K."/>
            <person name="Yokoi T."/>
            <person name="Furuya T."/>
            <person name="Kikkawa E."/>
            <person name="Omura Y."/>
            <person name="Abe K."/>
            <person name="Kamihara K."/>
            <person name="Katsuta N."/>
            <person name="Sato K."/>
            <person name="Tanikawa M."/>
            <person name="Yamazaki M."/>
            <person name="Ninomiya K."/>
            <person name="Ishibashi T."/>
            <person name="Yamashita H."/>
            <person name="Murakawa K."/>
            <person name="Fujimori K."/>
            <person name="Tanai H."/>
            <person name="Kimata M."/>
            <person name="Watanabe M."/>
            <person name="Hiraoka S."/>
            <person name="Chiba Y."/>
            <person name="Ishida S."/>
            <person name="Ono Y."/>
            <person name="Takiguchi S."/>
            <person name="Watanabe S."/>
            <person name="Yosida M."/>
            <person name="Hotuta T."/>
            <person name="Kusano J."/>
            <person name="Kanehori K."/>
            <person name="Takahashi-Fujii A."/>
            <person name="Hara H."/>
            <person name="Tanase T.-O."/>
            <person name="Nomura Y."/>
            <person name="Togiya S."/>
            <person name="Komai F."/>
            <person name="Hara R."/>
            <person name="Takeuchi K."/>
            <person name="Arita M."/>
            <person name="Imose N."/>
            <person name="Musashino K."/>
            <person name="Yuuki H."/>
            <person name="Oshima A."/>
            <person name="Sasaki N."/>
            <person name="Aotsuka S."/>
            <person name="Yoshikawa Y."/>
            <person name="Matsunawa H."/>
            <person name="Ichihara T."/>
            <person name="Shiohata N."/>
            <person name="Sano S."/>
            <person name="Moriya S."/>
            <person name="Momiyama H."/>
            <person name="Satoh N."/>
            <person name="Takami S."/>
            <person name="Terashima Y."/>
            <person name="Suzuki O."/>
            <person name="Nakagawa S."/>
            <person name="Senoh A."/>
            <person name="Mizoguchi H."/>
            <person name="Goto Y."/>
            <person name="Shimizu F."/>
            <person name="Wakebe H."/>
            <person name="Hishigaki H."/>
            <person name="Watanabe T."/>
            <person name="Sugiyama A."/>
            <person name="Takemoto M."/>
            <person name="Kawakami B."/>
            <person name="Yamazaki M."/>
            <person name="Watanabe K."/>
            <person name="Kumagai A."/>
            <person name="Itakura S."/>
            <person name="Fukuzumi Y."/>
            <person name="Fujimori Y."/>
            <person name="Komiyama M."/>
            <person name="Tashiro H."/>
            <person name="Tanigami A."/>
            <person name="Fujiwara T."/>
            <person name="Ono T."/>
            <person name="Yamada K."/>
            <person name="Fujii Y."/>
            <person name="Ozaki K."/>
            <person name="Hirao M."/>
            <person name="Ohmori Y."/>
            <person name="Kawabata A."/>
            <person name="Hikiji T."/>
            <person name="Kobatake N."/>
            <person name="Inagaki H."/>
            <person name="Ikema Y."/>
            <person name="Okamoto S."/>
            <person name="Okitani R."/>
            <person name="Kawakami T."/>
            <person name="Noguchi S."/>
            <person name="Itoh T."/>
            <person name="Shigeta K."/>
            <person name="Senba T."/>
            <person name="Matsumura K."/>
            <person name="Nakajima Y."/>
            <person name="Mizuno T."/>
            <person name="Morinaga M."/>
            <person name="Sasaki M."/>
            <person name="Togashi T."/>
            <person name="Oyama M."/>
            <person name="Hata H."/>
            <person name="Watanabe M."/>
            <person name="Komatsu T."/>
            <person name="Mizushima-Sugano J."/>
            <person name="Satoh T."/>
            <person name="Shirai Y."/>
            <person name="Takahashi Y."/>
            <person name="Nakagawa K."/>
            <person name="Okumura K."/>
            <person name="Nagase T."/>
            <person name="Nomura N."/>
            <person name="Kikuchi H."/>
            <person name="Masuho Y."/>
            <person name="Yamashita R."/>
            <person name="Nakai K."/>
            <person name="Yada T."/>
            <person name="Nakamura Y."/>
            <person name="Ohara O."/>
            <person name="Isogai T."/>
            <person name="Sugano S."/>
        </authorList>
    </citation>
    <scope>NUCLEOTIDE SEQUENCE [LARGE SCALE MRNA] (ISOFORM LONG)</scope>
</reference>
<reference key="4">
    <citation type="submission" date="2005-07" db="EMBL/GenBank/DDBJ databases">
        <authorList>
            <person name="Mural R.J."/>
            <person name="Istrail S."/>
            <person name="Sutton G.G."/>
            <person name="Florea L."/>
            <person name="Halpern A.L."/>
            <person name="Mobarry C.M."/>
            <person name="Lippert R."/>
            <person name="Walenz B."/>
            <person name="Shatkay H."/>
            <person name="Dew I."/>
            <person name="Miller J.R."/>
            <person name="Flanigan M.J."/>
            <person name="Edwards N.J."/>
            <person name="Bolanos R."/>
            <person name="Fasulo D."/>
            <person name="Halldorsson B.V."/>
            <person name="Hannenhalli S."/>
            <person name="Turner R."/>
            <person name="Yooseph S."/>
            <person name="Lu F."/>
            <person name="Nusskern D.R."/>
            <person name="Shue B.C."/>
            <person name="Zheng X.H."/>
            <person name="Zhong F."/>
            <person name="Delcher A.L."/>
            <person name="Huson D.H."/>
            <person name="Kravitz S.A."/>
            <person name="Mouchard L."/>
            <person name="Reinert K."/>
            <person name="Remington K.A."/>
            <person name="Clark A.G."/>
            <person name="Waterman M.S."/>
            <person name="Eichler E.E."/>
            <person name="Adams M.D."/>
            <person name="Hunkapiller M.W."/>
            <person name="Myers E.W."/>
            <person name="Venter J.C."/>
        </authorList>
    </citation>
    <scope>NUCLEOTIDE SEQUENCE [LARGE SCALE GENOMIC DNA]</scope>
</reference>
<reference key="5">
    <citation type="journal article" date="2004" name="Genome Res.">
        <title>The status, quality, and expansion of the NIH full-length cDNA project: the Mammalian Gene Collection (MGC).</title>
        <authorList>
            <consortium name="The MGC Project Team"/>
        </authorList>
    </citation>
    <scope>NUCLEOTIDE SEQUENCE [LARGE SCALE MRNA] (ISOFORM LONG)</scope>
    <source>
        <tissue>Brain</tissue>
        <tissue>Prostate</tissue>
    </source>
</reference>
<reference key="6">
    <citation type="journal article" date="2007" name="BMC Genomics">
        <title>The full-ORF clone resource of the German cDNA consortium.</title>
        <authorList>
            <person name="Bechtel S."/>
            <person name="Rosenfelder H."/>
            <person name="Duda A."/>
            <person name="Schmidt C.P."/>
            <person name="Ernst U."/>
            <person name="Wellenreuther R."/>
            <person name="Mehrle A."/>
            <person name="Schuster C."/>
            <person name="Bahr A."/>
            <person name="Bloecker H."/>
            <person name="Heubner D."/>
            <person name="Hoerlein A."/>
            <person name="Michel G."/>
            <person name="Wedler H."/>
            <person name="Koehrer K."/>
            <person name="Ottenwaelder B."/>
            <person name="Poustka A."/>
            <person name="Wiemann S."/>
            <person name="Schupp I."/>
        </authorList>
    </citation>
    <scope>NUCLEOTIDE SEQUENCE [LARGE SCALE MRNA] OF 157-761 (ISOFORM LONG)</scope>
    <source>
        <tissue>Brain</tissue>
    </source>
</reference>
<reference key="7">
    <citation type="journal article" date="2011" name="BMC Syst. Biol.">
        <title>Initial characterization of the human central proteome.</title>
        <authorList>
            <person name="Burkard T.R."/>
            <person name="Planyavsky M."/>
            <person name="Kaupe I."/>
            <person name="Breitwieser F.P."/>
            <person name="Buerckstuemmer T."/>
            <person name="Bennett K.L."/>
            <person name="Superti-Furga G."/>
            <person name="Colinge J."/>
        </authorList>
    </citation>
    <scope>IDENTIFICATION BY MASS SPECTROMETRY [LARGE SCALE ANALYSIS]</scope>
</reference>
<reference key="8">
    <citation type="journal article" date="2011" name="Sci. Signal.">
        <title>System-wide temporal characterization of the proteome and phosphoproteome of human embryonic stem cell differentiation.</title>
        <authorList>
            <person name="Rigbolt K.T."/>
            <person name="Prokhorova T.A."/>
            <person name="Akimov V."/>
            <person name="Henningsen J."/>
            <person name="Johansen P.T."/>
            <person name="Kratchmarova I."/>
            <person name="Kassem M."/>
            <person name="Mann M."/>
            <person name="Olsen J.V."/>
            <person name="Blagoev B."/>
        </authorList>
    </citation>
    <scope>IDENTIFICATION BY MASS SPECTROMETRY [LARGE SCALE ANALYSIS]</scope>
</reference>
<reference key="9">
    <citation type="journal article" date="2013" name="J. Proteome Res.">
        <title>Toward a comprehensive characterization of a human cancer cell phosphoproteome.</title>
        <authorList>
            <person name="Zhou H."/>
            <person name="Di Palma S."/>
            <person name="Preisinger C."/>
            <person name="Peng M."/>
            <person name="Polat A.N."/>
            <person name="Heck A.J."/>
            <person name="Mohammed S."/>
        </authorList>
    </citation>
    <scope>PHOSPHORYLATION [LARGE SCALE ANALYSIS] AT SER-566</scope>
    <scope>IDENTIFICATION BY MASS SPECTROMETRY [LARGE SCALE ANALYSIS]</scope>
    <source>
        <tissue>Erythroleukemia</tissue>
    </source>
</reference>
<dbReference type="EMBL" id="AF007393">
    <property type="protein sequence ID" value="AAC39564.1"/>
    <property type="molecule type" value="mRNA"/>
</dbReference>
<dbReference type="EMBL" id="AF081567">
    <property type="protein sequence ID" value="AAG01570.1"/>
    <property type="molecule type" value="mRNA"/>
</dbReference>
<dbReference type="EMBL" id="AK291843">
    <property type="protein sequence ID" value="BAF84532.1"/>
    <property type="molecule type" value="mRNA"/>
</dbReference>
<dbReference type="EMBL" id="CH471076">
    <property type="protein sequence ID" value="EAW74993.1"/>
    <property type="molecule type" value="Genomic_DNA"/>
</dbReference>
<dbReference type="EMBL" id="BC021992">
    <property type="protein sequence ID" value="AAH21992.1"/>
    <property type="status" value="ALT_INIT"/>
    <property type="molecule type" value="mRNA"/>
</dbReference>
<dbReference type="EMBL" id="BC117138">
    <property type="protein sequence ID" value="AAI17139.1"/>
    <property type="molecule type" value="mRNA"/>
</dbReference>
<dbReference type="EMBL" id="BC117140">
    <property type="protein sequence ID" value="AAI17141.1"/>
    <property type="molecule type" value="mRNA"/>
</dbReference>
<dbReference type="EMBL" id="AL049970">
    <property type="protein sequence ID" value="CAB43226.1"/>
    <property type="status" value="ALT_FRAME"/>
    <property type="molecule type" value="mRNA"/>
</dbReference>
<dbReference type="CCDS" id="CCDS8243.1">
    <molecule id="O43422-1"/>
</dbReference>
<dbReference type="RefSeq" id="NP_004696.2">
    <molecule id="O43422-1"/>
    <property type="nucleotide sequence ID" value="NM_004705.3"/>
</dbReference>
<dbReference type="SMR" id="O43422"/>
<dbReference type="BioGRID" id="111598">
    <property type="interactions" value="147"/>
</dbReference>
<dbReference type="FunCoup" id="O43422">
    <property type="interactions" value="2072"/>
</dbReference>
<dbReference type="IntAct" id="O43422">
    <property type="interactions" value="83"/>
</dbReference>
<dbReference type="STRING" id="9606.ENSP00000260045"/>
<dbReference type="iPTMnet" id="O43422"/>
<dbReference type="PhosphoSitePlus" id="O43422"/>
<dbReference type="BioMuta" id="THAP12"/>
<dbReference type="jPOST" id="O43422"/>
<dbReference type="MassIVE" id="O43422"/>
<dbReference type="PaxDb" id="9606-ENSP00000260045"/>
<dbReference type="PeptideAtlas" id="O43422"/>
<dbReference type="ProteomicsDB" id="48933">
    <molecule id="O43422-1"/>
</dbReference>
<dbReference type="ProteomicsDB" id="48934">
    <molecule id="O43422-2"/>
</dbReference>
<dbReference type="Pumba" id="O43422"/>
<dbReference type="Antibodypedia" id="2160">
    <property type="antibodies" value="161 antibodies from 22 providers"/>
</dbReference>
<dbReference type="DNASU" id="5612"/>
<dbReference type="Ensembl" id="ENST00000260045.8">
    <molecule id="O43422-1"/>
    <property type="protein sequence ID" value="ENSP00000260045.3"/>
    <property type="gene ID" value="ENSG00000137492.9"/>
</dbReference>
<dbReference type="GeneID" id="5612"/>
<dbReference type="KEGG" id="hsa:5612"/>
<dbReference type="MANE-Select" id="ENST00000260045.8">
    <property type="protein sequence ID" value="ENSP00000260045.3"/>
    <property type="RefSeq nucleotide sequence ID" value="NM_004705.4"/>
    <property type="RefSeq protein sequence ID" value="NP_004696.2"/>
</dbReference>
<dbReference type="UCSC" id="uc001oxh.2">
    <molecule id="O43422-1"/>
    <property type="organism name" value="human"/>
</dbReference>
<dbReference type="AGR" id="HGNC:9440"/>
<dbReference type="CTD" id="5612"/>
<dbReference type="DisGeNET" id="5612"/>
<dbReference type="GeneCards" id="THAP12"/>
<dbReference type="HGNC" id="HGNC:9440">
    <property type="gene designation" value="THAP12"/>
</dbReference>
<dbReference type="HPA" id="ENSG00000137492">
    <property type="expression patterns" value="Low tissue specificity"/>
</dbReference>
<dbReference type="MIM" id="607374">
    <property type="type" value="gene"/>
</dbReference>
<dbReference type="neXtProt" id="NX_O43422"/>
<dbReference type="OpenTargets" id="ENSG00000137492"/>
<dbReference type="PharmGKB" id="PA33781"/>
<dbReference type="VEuPathDB" id="HostDB:ENSG00000137492"/>
<dbReference type="eggNOG" id="ENOG502QU3U">
    <property type="taxonomic scope" value="Eukaryota"/>
</dbReference>
<dbReference type="GeneTree" id="ENSGT00530000063516"/>
<dbReference type="HOGENOM" id="CLU_023409_0_0_1"/>
<dbReference type="InParanoid" id="O43422"/>
<dbReference type="OMA" id="YCSKAQQ"/>
<dbReference type="OrthoDB" id="7683421at2759"/>
<dbReference type="PAN-GO" id="O43422">
    <property type="GO annotations" value="0 GO annotations based on evolutionary models"/>
</dbReference>
<dbReference type="PhylomeDB" id="O43422"/>
<dbReference type="TreeFam" id="TF330114"/>
<dbReference type="PathwayCommons" id="O43422"/>
<dbReference type="SignaLink" id="O43422"/>
<dbReference type="SIGNOR" id="O43422"/>
<dbReference type="BioGRID-ORCS" id="5612">
    <property type="hits" value="351 hits in 1173 CRISPR screens"/>
</dbReference>
<dbReference type="ChiTaRS" id="THAP12">
    <property type="organism name" value="human"/>
</dbReference>
<dbReference type="GeneWiki" id="PRKRIR"/>
<dbReference type="GenomeRNAi" id="5612"/>
<dbReference type="Pharos" id="O43422">
    <property type="development level" value="Tbio"/>
</dbReference>
<dbReference type="PRO" id="PR:O43422"/>
<dbReference type="Proteomes" id="UP000005640">
    <property type="component" value="Chromosome 11"/>
</dbReference>
<dbReference type="RNAct" id="O43422">
    <property type="molecule type" value="protein"/>
</dbReference>
<dbReference type="Bgee" id="ENSG00000137492">
    <property type="expression patterns" value="Expressed in calcaneal tendon and 205 other cell types or tissues"/>
</dbReference>
<dbReference type="ExpressionAtlas" id="O43422">
    <property type="expression patterns" value="baseline and differential"/>
</dbReference>
<dbReference type="GO" id="GO:0005634">
    <property type="term" value="C:nucleus"/>
    <property type="evidence" value="ECO:0007669"/>
    <property type="project" value="Ensembl"/>
</dbReference>
<dbReference type="GO" id="GO:0003677">
    <property type="term" value="F:DNA binding"/>
    <property type="evidence" value="ECO:0007669"/>
    <property type="project" value="UniProtKB-KW"/>
</dbReference>
<dbReference type="GO" id="GO:0046983">
    <property type="term" value="F:protein dimerization activity"/>
    <property type="evidence" value="ECO:0007669"/>
    <property type="project" value="InterPro"/>
</dbReference>
<dbReference type="GO" id="GO:0008270">
    <property type="term" value="F:zinc ion binding"/>
    <property type="evidence" value="ECO:0007669"/>
    <property type="project" value="UniProtKB-KW"/>
</dbReference>
<dbReference type="GO" id="GO:0008285">
    <property type="term" value="P:negative regulation of cell population proliferation"/>
    <property type="evidence" value="ECO:0000304"/>
    <property type="project" value="ProtInc"/>
</dbReference>
<dbReference type="GO" id="GO:0007165">
    <property type="term" value="P:signal transduction"/>
    <property type="evidence" value="ECO:0000304"/>
    <property type="project" value="ProtInc"/>
</dbReference>
<dbReference type="InterPro" id="IPR025398">
    <property type="entry name" value="DUF4371"/>
</dbReference>
<dbReference type="InterPro" id="IPR008906">
    <property type="entry name" value="HATC_C_dom"/>
</dbReference>
<dbReference type="InterPro" id="IPR052958">
    <property type="entry name" value="IFN-induced_PKR_regulator"/>
</dbReference>
<dbReference type="InterPro" id="IPR012337">
    <property type="entry name" value="RNaseH-like_sf"/>
</dbReference>
<dbReference type="InterPro" id="IPR006612">
    <property type="entry name" value="THAP_Znf"/>
</dbReference>
<dbReference type="PANTHER" id="PTHR46289:SF12">
    <property type="entry name" value="52 KDA REPRESSOR OF THE INHIBITOR OF THE PROTEIN KINASE"/>
    <property type="match status" value="1"/>
</dbReference>
<dbReference type="PANTHER" id="PTHR46289">
    <property type="entry name" value="52 KDA REPRESSOR OF THE INHIBITOR OF THE PROTEIN KINASE-LIKE PROTEIN-RELATED"/>
    <property type="match status" value="1"/>
</dbReference>
<dbReference type="Pfam" id="PF05699">
    <property type="entry name" value="Dimer_Tnp_hAT"/>
    <property type="match status" value="1"/>
</dbReference>
<dbReference type="Pfam" id="PF14291">
    <property type="entry name" value="DUF4371"/>
    <property type="match status" value="1"/>
</dbReference>
<dbReference type="Pfam" id="PF05485">
    <property type="entry name" value="THAP"/>
    <property type="match status" value="1"/>
</dbReference>
<dbReference type="SMART" id="SM00692">
    <property type="entry name" value="DM3"/>
    <property type="match status" value="1"/>
</dbReference>
<dbReference type="SMART" id="SM00980">
    <property type="entry name" value="THAP"/>
    <property type="match status" value="1"/>
</dbReference>
<dbReference type="SUPFAM" id="SSF57716">
    <property type="entry name" value="Glucocorticoid receptor-like (DNA-binding domain)"/>
    <property type="match status" value="1"/>
</dbReference>
<dbReference type="SUPFAM" id="SSF53098">
    <property type="entry name" value="Ribonuclease H-like"/>
    <property type="match status" value="1"/>
</dbReference>
<dbReference type="PROSITE" id="PS50950">
    <property type="entry name" value="ZF_THAP"/>
    <property type="match status" value="1"/>
</dbReference>
<proteinExistence type="evidence at protein level"/>
<sequence>MPNFCAAPNCTRKSTQSDLAFFRFPRDPARCQKWVENCRRADLEDKTPDQLNKHYRLCAKHFETSMICRTSPYRTVLRDNAIPTIFDLTSHLNNPHSRHRKRIKELSEDEIRTLKQKKIDETSEQEQKHKETNNSNAQNPSEEEGEGQDEDILPLTLEEKENKEYLKSLFEILILMGKQNIPLDGHEADEIPEGLFTPDNFQALLECRINSGEEVLRKRFETTAVNTLFCSKTQQRQMLEICESCIREETLREVRDSHFFSIITDDVVDIAGEEHLPVLVRFVDESHNLREEFIGFLPYEADAEILAVKFHTMITEKWGLNMEYCRGQAYIVSSGFSSKMKVVASRLLEKYPQAIYTLCSSCALNMWLAKSVPVMGVSVALGTIEEVCSFFHRSPQLLLELDNVISVLFQNSKERGKELKEICHSQWTGRHDAFEILVELLQALVLCLDGINSDTNIRWNNYIAGRAFVLCSAVSDFDFIVTIVVLKNVLSFTRAFGKNLQGQTSDVFFAAGSLTAVLHSLNEVMENIEVYHEFWFEEATNLATKLDIQMKLPGKFRRAHQGNLESQLTSESYYKETLSVPTVEHIIQELKDIFSEQHLKALKCLSLVPSVMGQLKFNTSEEHHADMYRSDLPNPDTLSAELHCWRIKWKHRGKDIELPSTIYEALHLPDIKFFPNVYALLKVLCILPVMKVENERYENGRKRLKAYLRNTLTDQRSSNLALLNINFDIKHDLDLMVDTYIKLYTSKSELPTDNSETVENT</sequence>